<feature type="chain" id="PRO_0000251899" description="Zinc finger protein 667">
    <location>
        <begin position="1"/>
        <end position="608"/>
    </location>
</feature>
<feature type="domain" description="KRAB" evidence="2">
    <location>
        <begin position="14"/>
        <end position="85"/>
    </location>
</feature>
<feature type="zinc finger region" description="C2H2-type 1" evidence="1">
    <location>
        <begin position="144"/>
        <end position="166"/>
    </location>
</feature>
<feature type="zinc finger region" description="C2H2-type 2" evidence="1">
    <location>
        <begin position="172"/>
        <end position="194"/>
    </location>
</feature>
<feature type="zinc finger region" description="C2H2-type 3" evidence="1">
    <location>
        <begin position="200"/>
        <end position="222"/>
    </location>
</feature>
<feature type="zinc finger region" description="C2H2-type 4" evidence="1">
    <location>
        <begin position="253"/>
        <end position="275"/>
    </location>
</feature>
<feature type="zinc finger region" description="C2H2-type 5" evidence="1">
    <location>
        <begin position="328"/>
        <end position="350"/>
    </location>
</feature>
<feature type="zinc finger region" description="C2H2-type 6" evidence="1">
    <location>
        <begin position="356"/>
        <end position="378"/>
    </location>
</feature>
<feature type="zinc finger region" description="C2H2-type 7" evidence="1">
    <location>
        <begin position="384"/>
        <end position="406"/>
    </location>
</feature>
<feature type="zinc finger region" description="C2H2-type 8" evidence="1">
    <location>
        <begin position="413"/>
        <end position="435"/>
    </location>
</feature>
<feature type="zinc finger region" description="C2H2-type 9" evidence="1">
    <location>
        <begin position="441"/>
        <end position="463"/>
    </location>
</feature>
<feature type="zinc finger region" description="C2H2-type 10" evidence="1">
    <location>
        <begin position="469"/>
        <end position="491"/>
    </location>
</feature>
<feature type="zinc finger region" description="C2H2-type 11" evidence="1">
    <location>
        <begin position="497"/>
        <end position="519"/>
    </location>
</feature>
<feature type="zinc finger region" description="C2H2-type 12" evidence="1">
    <location>
        <begin position="525"/>
        <end position="547"/>
    </location>
</feature>
<feature type="zinc finger region" description="C2H2-type 13" evidence="1">
    <location>
        <begin position="553"/>
        <end position="575"/>
    </location>
</feature>
<feature type="zinc finger region" description="C2H2-type 14" evidence="1">
    <location>
        <begin position="581"/>
        <end position="603"/>
    </location>
</feature>
<feature type="region of interest" description="Disordered" evidence="3">
    <location>
        <begin position="75"/>
        <end position="143"/>
    </location>
</feature>
<feature type="compositionally biased region" description="Basic and acidic residues" evidence="3">
    <location>
        <begin position="83"/>
        <end position="94"/>
    </location>
</feature>
<feature type="compositionally biased region" description="Basic residues" evidence="3">
    <location>
        <begin position="124"/>
        <end position="143"/>
    </location>
</feature>
<evidence type="ECO:0000255" key="1">
    <source>
        <dbReference type="PROSITE-ProRule" id="PRU00042"/>
    </source>
</evidence>
<evidence type="ECO:0000255" key="2">
    <source>
        <dbReference type="PROSITE-ProRule" id="PRU00119"/>
    </source>
</evidence>
<evidence type="ECO:0000256" key="3">
    <source>
        <dbReference type="SAM" id="MobiDB-lite"/>
    </source>
</evidence>
<evidence type="ECO:0000305" key="4"/>
<gene>
    <name type="primary">Znf667</name>
    <name type="synonym">Mip1</name>
    <name type="synonym">Mipu1</name>
    <name type="synonym">Zfp667</name>
</gene>
<reference key="1">
    <citation type="journal article" date="2004" name="Sheng Wu Hua Xue Yu Sheng Wu Wu Li Jin Zhan">
        <title>Cloning and characterization of a new gene Mip1 up-regulated during myocardial ischemia-reperfusion.</title>
        <authorList>
            <person name="Yuan C."/>
            <person name="Zhang H."/>
            <person name="Liu Y."/>
            <person name="Wang Q."/>
            <person name="Xiao X."/>
        </authorList>
    </citation>
    <scope>NUCLEOTIDE SEQUENCE [MRNA]</scope>
    <source>
        <strain>Wistar</strain>
    </source>
</reference>
<sequence length="608" mass="70038">MPAARGKSKSKAPVTFGDLAIYFSQEEWEWLSPNQKDLYEDVMLENYHNLVSVGLACRRPNIIALLEKGKAPWMVEPSRKRRGPELGSKDETKKLPPSQCNKSGPSICKKPDSSQQKVPTEKAKHNKNAVPRKNKKGHSGKKSLKCNSCGKTFFRSLSLKLHQGFHTGERSYECSTCGQVFRQILSLILHQRVHTQNKSYECDKCGDIFNKKLTLMIHRRSHNGKENFHHEKTSDSCPSLSPHHNNHAIDSIHQCRKCGKVFSRMSSLLLHKKIHNRKRIQKYSACGRGFKKKPVLVHKRICIGKKTHENKALIQSLRQRTYQSENPFTCRKCRKSFSRISALMLHQRAHTSGNPYKCDKCQKDFGRLSTLILHLRIHSGEKQFKCNKCEKVCNRLSSFIQHKKIHKRKKKLIECKECGKMFGGMKNLKVHLNIHSEEKPFKCNKCSKVFGRQSFLSEHQRIHTGEKPYQCEECGKAFSHRISLTRHKRIHSEDRPYECDLCGKAFSQSAHLAQHERIHTGEKPYACKICKKSFTQRISLILHERSHTGEKPYECNECGKAFSSGSDLIRHQRSHSSEKPYECSKCGKAYSRSSSLIRHQSIHSEEMS</sequence>
<name>ZN667_RAT</name>
<accession>Q5MYW4</accession>
<proteinExistence type="evidence at transcript level"/>
<comment type="function">
    <text>May be involved in transcriptional regulation.</text>
</comment>
<comment type="subcellular location">
    <subcellularLocation>
        <location evidence="4">Nucleus</location>
    </subcellularLocation>
</comment>
<comment type="similarity">
    <text evidence="4">Belongs to the krueppel C2H2-type zinc-finger protein family.</text>
</comment>
<dbReference type="EMBL" id="AY221750">
    <property type="protein sequence ID" value="AAO67708.1"/>
    <property type="molecule type" value="mRNA"/>
</dbReference>
<dbReference type="RefSeq" id="NP_001008557.1">
    <property type="nucleotide sequence ID" value="NM_001008557.1"/>
</dbReference>
<dbReference type="RefSeq" id="XP_006228251.1">
    <property type="nucleotide sequence ID" value="XM_006228189.3"/>
</dbReference>
<dbReference type="SMR" id="Q5MYW4"/>
<dbReference type="FunCoup" id="Q5MYW4">
    <property type="interactions" value="81"/>
</dbReference>
<dbReference type="STRING" id="10116.ENSRNOP00000061115"/>
<dbReference type="PhosphoSitePlus" id="Q5MYW4"/>
<dbReference type="PaxDb" id="10116-ENSRNOP00000061115"/>
<dbReference type="Ensembl" id="ENSRNOT00000063956.4">
    <property type="protein sequence ID" value="ENSRNOP00000061115.3"/>
    <property type="gene ID" value="ENSRNOG00000033906.6"/>
</dbReference>
<dbReference type="GeneID" id="308326"/>
<dbReference type="KEGG" id="rno:308326"/>
<dbReference type="UCSC" id="RGD:1359114">
    <property type="organism name" value="rat"/>
</dbReference>
<dbReference type="AGR" id="RGD:1359114"/>
<dbReference type="CTD" id="384763"/>
<dbReference type="RGD" id="1359114">
    <property type="gene designation" value="Zfp667"/>
</dbReference>
<dbReference type="GeneTree" id="ENSGT00390000021477"/>
<dbReference type="HOGENOM" id="CLU_002678_44_5_1"/>
<dbReference type="InParanoid" id="Q5MYW4"/>
<dbReference type="OMA" id="RIHMSKK"/>
<dbReference type="OrthoDB" id="8922241at2759"/>
<dbReference type="PhylomeDB" id="Q5MYW4"/>
<dbReference type="TreeFam" id="TF341817"/>
<dbReference type="Reactome" id="R-RNO-212436">
    <property type="pathway name" value="Generic Transcription Pathway"/>
</dbReference>
<dbReference type="PRO" id="PR:Q5MYW4"/>
<dbReference type="Proteomes" id="UP000002494">
    <property type="component" value="Chromosome 1"/>
</dbReference>
<dbReference type="Bgee" id="ENSRNOG00000033906">
    <property type="expression patterns" value="Expressed in quadriceps femoris and 19 other cell types or tissues"/>
</dbReference>
<dbReference type="GO" id="GO:0005634">
    <property type="term" value="C:nucleus"/>
    <property type="evidence" value="ECO:0007669"/>
    <property type="project" value="UniProtKB-SubCell"/>
</dbReference>
<dbReference type="GO" id="GO:0003700">
    <property type="term" value="F:DNA-binding transcription factor activity"/>
    <property type="evidence" value="ECO:0000318"/>
    <property type="project" value="GO_Central"/>
</dbReference>
<dbReference type="GO" id="GO:0000978">
    <property type="term" value="F:RNA polymerase II cis-regulatory region sequence-specific DNA binding"/>
    <property type="evidence" value="ECO:0000318"/>
    <property type="project" value="GO_Central"/>
</dbReference>
<dbReference type="GO" id="GO:0008270">
    <property type="term" value="F:zinc ion binding"/>
    <property type="evidence" value="ECO:0007669"/>
    <property type="project" value="UniProtKB-KW"/>
</dbReference>
<dbReference type="GO" id="GO:0006357">
    <property type="term" value="P:regulation of transcription by RNA polymerase II"/>
    <property type="evidence" value="ECO:0000318"/>
    <property type="project" value="GO_Central"/>
</dbReference>
<dbReference type="CDD" id="cd07765">
    <property type="entry name" value="KRAB_A-box"/>
    <property type="match status" value="1"/>
</dbReference>
<dbReference type="FunFam" id="3.30.160.60:FF:000295">
    <property type="entry name" value="zinc finger protein 19"/>
    <property type="match status" value="1"/>
</dbReference>
<dbReference type="FunFam" id="3.30.160.60:FF:000475">
    <property type="entry name" value="zinc finger protein 32 isoform X1"/>
    <property type="match status" value="1"/>
</dbReference>
<dbReference type="FunFam" id="3.30.160.60:FF:002343">
    <property type="entry name" value="Zinc finger protein 33A"/>
    <property type="match status" value="1"/>
</dbReference>
<dbReference type="FunFam" id="3.30.160.60:FF:000016">
    <property type="entry name" value="zinc finger protein 37 homolog"/>
    <property type="match status" value="1"/>
</dbReference>
<dbReference type="FunFam" id="3.30.160.60:FF:001498">
    <property type="entry name" value="Zinc finger protein 404"/>
    <property type="match status" value="1"/>
</dbReference>
<dbReference type="FunFam" id="3.30.160.60:FF:002090">
    <property type="entry name" value="Zinc finger protein 473"/>
    <property type="match status" value="1"/>
</dbReference>
<dbReference type="FunFam" id="3.30.160.60:FF:000051">
    <property type="entry name" value="zinc finger protein 585A"/>
    <property type="match status" value="1"/>
</dbReference>
<dbReference type="FunFam" id="3.30.160.60:FF:000030">
    <property type="entry name" value="Zinc finger protein 628"/>
    <property type="match status" value="1"/>
</dbReference>
<dbReference type="FunFam" id="3.30.160.60:FF:001803">
    <property type="entry name" value="Zinc finger protein 667"/>
    <property type="match status" value="1"/>
</dbReference>
<dbReference type="FunFam" id="3.30.160.60:FF:000953">
    <property type="entry name" value="Zinc finger protein 691"/>
    <property type="match status" value="1"/>
</dbReference>
<dbReference type="Gene3D" id="6.10.140.140">
    <property type="match status" value="1"/>
</dbReference>
<dbReference type="Gene3D" id="3.30.160.60">
    <property type="entry name" value="Classic Zinc Finger"/>
    <property type="match status" value="14"/>
</dbReference>
<dbReference type="InterPro" id="IPR001909">
    <property type="entry name" value="KRAB"/>
</dbReference>
<dbReference type="InterPro" id="IPR036051">
    <property type="entry name" value="KRAB_dom_sf"/>
</dbReference>
<dbReference type="InterPro" id="IPR050826">
    <property type="entry name" value="Krueppel_C2H2_ZnFinger"/>
</dbReference>
<dbReference type="InterPro" id="IPR036236">
    <property type="entry name" value="Znf_C2H2_sf"/>
</dbReference>
<dbReference type="InterPro" id="IPR013087">
    <property type="entry name" value="Znf_C2H2_type"/>
</dbReference>
<dbReference type="PANTHER" id="PTHR24377">
    <property type="entry name" value="IP01015P-RELATED"/>
    <property type="match status" value="1"/>
</dbReference>
<dbReference type="Pfam" id="PF01352">
    <property type="entry name" value="KRAB"/>
    <property type="match status" value="1"/>
</dbReference>
<dbReference type="Pfam" id="PF00096">
    <property type="entry name" value="zf-C2H2"/>
    <property type="match status" value="11"/>
</dbReference>
<dbReference type="SMART" id="SM00349">
    <property type="entry name" value="KRAB"/>
    <property type="match status" value="1"/>
</dbReference>
<dbReference type="SMART" id="SM00355">
    <property type="entry name" value="ZnF_C2H2"/>
    <property type="match status" value="14"/>
</dbReference>
<dbReference type="SUPFAM" id="SSF57667">
    <property type="entry name" value="beta-beta-alpha zinc fingers"/>
    <property type="match status" value="9"/>
</dbReference>
<dbReference type="SUPFAM" id="SSF109640">
    <property type="entry name" value="KRAB domain (Kruppel-associated box)"/>
    <property type="match status" value="1"/>
</dbReference>
<dbReference type="PROSITE" id="PS50805">
    <property type="entry name" value="KRAB"/>
    <property type="match status" value="1"/>
</dbReference>
<dbReference type="PROSITE" id="PS00028">
    <property type="entry name" value="ZINC_FINGER_C2H2_1"/>
    <property type="match status" value="14"/>
</dbReference>
<dbReference type="PROSITE" id="PS50157">
    <property type="entry name" value="ZINC_FINGER_C2H2_2"/>
    <property type="match status" value="14"/>
</dbReference>
<protein>
    <recommendedName>
        <fullName>Zinc finger protein 667</fullName>
    </recommendedName>
    <alternativeName>
        <fullName>Myocardial ischemic preconditioning up-regulated protein 1</fullName>
    </alternativeName>
</protein>
<keyword id="KW-0238">DNA-binding</keyword>
<keyword id="KW-0479">Metal-binding</keyword>
<keyword id="KW-0539">Nucleus</keyword>
<keyword id="KW-1185">Reference proteome</keyword>
<keyword id="KW-0677">Repeat</keyword>
<keyword id="KW-0804">Transcription</keyword>
<keyword id="KW-0805">Transcription regulation</keyword>
<keyword id="KW-0862">Zinc</keyword>
<keyword id="KW-0863">Zinc-finger</keyword>
<organism>
    <name type="scientific">Rattus norvegicus</name>
    <name type="common">Rat</name>
    <dbReference type="NCBI Taxonomy" id="10116"/>
    <lineage>
        <taxon>Eukaryota</taxon>
        <taxon>Metazoa</taxon>
        <taxon>Chordata</taxon>
        <taxon>Craniata</taxon>
        <taxon>Vertebrata</taxon>
        <taxon>Euteleostomi</taxon>
        <taxon>Mammalia</taxon>
        <taxon>Eutheria</taxon>
        <taxon>Euarchontoglires</taxon>
        <taxon>Glires</taxon>
        <taxon>Rodentia</taxon>
        <taxon>Myomorpha</taxon>
        <taxon>Muroidea</taxon>
        <taxon>Muridae</taxon>
        <taxon>Murinae</taxon>
        <taxon>Rattus</taxon>
    </lineage>
</organism>